<protein>
    <recommendedName>
        <fullName evidence="1">tRNA pseudouridine synthase B</fullName>
        <ecNumber evidence="1">5.4.99.25</ecNumber>
    </recommendedName>
    <alternativeName>
        <fullName evidence="1">tRNA pseudouridine(55) synthase</fullName>
        <shortName evidence="1">Psi55 synthase</shortName>
    </alternativeName>
    <alternativeName>
        <fullName evidence="1">tRNA pseudouridylate synthase</fullName>
    </alternativeName>
    <alternativeName>
        <fullName evidence="1">tRNA-uridine isomerase</fullName>
    </alternativeName>
</protein>
<evidence type="ECO:0000255" key="1">
    <source>
        <dbReference type="HAMAP-Rule" id="MF_01080"/>
    </source>
</evidence>
<comment type="function">
    <text evidence="1">Responsible for synthesis of pseudouridine from uracil-55 in the psi GC loop of transfer RNAs.</text>
</comment>
<comment type="catalytic activity">
    <reaction evidence="1">
        <text>uridine(55) in tRNA = pseudouridine(55) in tRNA</text>
        <dbReference type="Rhea" id="RHEA:42532"/>
        <dbReference type="Rhea" id="RHEA-COMP:10101"/>
        <dbReference type="Rhea" id="RHEA-COMP:10102"/>
        <dbReference type="ChEBI" id="CHEBI:65314"/>
        <dbReference type="ChEBI" id="CHEBI:65315"/>
        <dbReference type="EC" id="5.4.99.25"/>
    </reaction>
</comment>
<comment type="similarity">
    <text evidence="1">Belongs to the pseudouridine synthase TruB family. Type 1 subfamily.</text>
</comment>
<organism>
    <name type="scientific">Deinococcus deserti (strain DSM 17065 / CIP 109153 / LMG 22923 / VCD115)</name>
    <dbReference type="NCBI Taxonomy" id="546414"/>
    <lineage>
        <taxon>Bacteria</taxon>
        <taxon>Thermotogati</taxon>
        <taxon>Deinococcota</taxon>
        <taxon>Deinococci</taxon>
        <taxon>Deinococcales</taxon>
        <taxon>Deinococcaceae</taxon>
        <taxon>Deinococcus</taxon>
    </lineage>
</organism>
<reference key="1">
    <citation type="journal article" date="2009" name="PLoS Genet.">
        <title>Alliance of proteomics and genomics to unravel the specificities of Sahara bacterium Deinococcus deserti.</title>
        <authorList>
            <person name="de Groot A."/>
            <person name="Dulermo R."/>
            <person name="Ortet P."/>
            <person name="Blanchard L."/>
            <person name="Guerin P."/>
            <person name="Fernandez B."/>
            <person name="Vacherie B."/>
            <person name="Dossat C."/>
            <person name="Jolivet E."/>
            <person name="Siguier P."/>
            <person name="Chandler M."/>
            <person name="Barakat M."/>
            <person name="Dedieu A."/>
            <person name="Barbe V."/>
            <person name="Heulin T."/>
            <person name="Sommer S."/>
            <person name="Achouak W."/>
            <person name="Armengaud J."/>
        </authorList>
    </citation>
    <scope>NUCLEOTIDE SEQUENCE [LARGE SCALE GENOMIC DNA]</scope>
    <source>
        <strain>DSM 17065 / CIP 109153 / LMG 22923 / VCD115</strain>
    </source>
</reference>
<feature type="chain" id="PRO_1000213502" description="tRNA pseudouridine synthase B">
    <location>
        <begin position="1"/>
        <end position="310"/>
    </location>
</feature>
<feature type="active site" description="Nucleophile" evidence="1">
    <location>
        <position position="37"/>
    </location>
</feature>
<dbReference type="EC" id="5.4.99.25" evidence="1"/>
<dbReference type="EMBL" id="CP001114">
    <property type="protein sequence ID" value="ACO45737.1"/>
    <property type="molecule type" value="Genomic_DNA"/>
</dbReference>
<dbReference type="RefSeq" id="WP_012692860.1">
    <property type="nucleotide sequence ID" value="NC_012526.1"/>
</dbReference>
<dbReference type="SMR" id="C1D1L3"/>
<dbReference type="STRING" id="546414.Deide_08630"/>
<dbReference type="PaxDb" id="546414-Deide_08630"/>
<dbReference type="KEGG" id="ddr:Deide_08630"/>
<dbReference type="eggNOG" id="COG0130">
    <property type="taxonomic scope" value="Bacteria"/>
</dbReference>
<dbReference type="HOGENOM" id="CLU_032087_0_2_0"/>
<dbReference type="OrthoDB" id="9802309at2"/>
<dbReference type="Proteomes" id="UP000002208">
    <property type="component" value="Chromosome"/>
</dbReference>
<dbReference type="GO" id="GO:0003723">
    <property type="term" value="F:RNA binding"/>
    <property type="evidence" value="ECO:0007669"/>
    <property type="project" value="InterPro"/>
</dbReference>
<dbReference type="GO" id="GO:0160148">
    <property type="term" value="F:tRNA pseudouridine(55) synthase activity"/>
    <property type="evidence" value="ECO:0007669"/>
    <property type="project" value="UniProtKB-EC"/>
</dbReference>
<dbReference type="GO" id="GO:1990481">
    <property type="term" value="P:mRNA pseudouridine synthesis"/>
    <property type="evidence" value="ECO:0007669"/>
    <property type="project" value="TreeGrafter"/>
</dbReference>
<dbReference type="GO" id="GO:0031119">
    <property type="term" value="P:tRNA pseudouridine synthesis"/>
    <property type="evidence" value="ECO:0007669"/>
    <property type="project" value="UniProtKB-UniRule"/>
</dbReference>
<dbReference type="CDD" id="cd02573">
    <property type="entry name" value="PseudoU_synth_EcTruB"/>
    <property type="match status" value="1"/>
</dbReference>
<dbReference type="Gene3D" id="3.30.2350.10">
    <property type="entry name" value="Pseudouridine synthase"/>
    <property type="match status" value="1"/>
</dbReference>
<dbReference type="HAMAP" id="MF_01080">
    <property type="entry name" value="TruB_bact"/>
    <property type="match status" value="1"/>
</dbReference>
<dbReference type="InterPro" id="IPR020103">
    <property type="entry name" value="PsdUridine_synth_cat_dom_sf"/>
</dbReference>
<dbReference type="InterPro" id="IPR002501">
    <property type="entry name" value="PsdUridine_synth_N"/>
</dbReference>
<dbReference type="InterPro" id="IPR014780">
    <property type="entry name" value="tRNA_psdUridine_synth_TruB"/>
</dbReference>
<dbReference type="InterPro" id="IPR032819">
    <property type="entry name" value="TruB_C"/>
</dbReference>
<dbReference type="NCBIfam" id="TIGR00431">
    <property type="entry name" value="TruB"/>
    <property type="match status" value="1"/>
</dbReference>
<dbReference type="PANTHER" id="PTHR13767:SF2">
    <property type="entry name" value="PSEUDOURIDYLATE SYNTHASE TRUB1"/>
    <property type="match status" value="1"/>
</dbReference>
<dbReference type="PANTHER" id="PTHR13767">
    <property type="entry name" value="TRNA-PSEUDOURIDINE SYNTHASE"/>
    <property type="match status" value="1"/>
</dbReference>
<dbReference type="Pfam" id="PF16198">
    <property type="entry name" value="TruB_C_2"/>
    <property type="match status" value="1"/>
</dbReference>
<dbReference type="Pfam" id="PF01509">
    <property type="entry name" value="TruB_N"/>
    <property type="match status" value="1"/>
</dbReference>
<dbReference type="SUPFAM" id="SSF55120">
    <property type="entry name" value="Pseudouridine synthase"/>
    <property type="match status" value="1"/>
</dbReference>
<name>TRUB_DEIDV</name>
<keyword id="KW-0413">Isomerase</keyword>
<keyword id="KW-1185">Reference proteome</keyword>
<keyword id="KW-0819">tRNA processing</keyword>
<proteinExistence type="inferred from homology"/>
<accession>C1D1L3</accession>
<gene>
    <name evidence="1" type="primary">truB</name>
    <name type="ordered locus">Deide_08630</name>
</gene>
<sequence>MPVLAVDKPLNLTSHDVVNRARRARGTRRVGHTGTLDPLATGVLVLCVDDSTKVVQFMEHDSKDYLAWVSLGAGTPTLDAEGPVDATAPVPPLDEDHIRGMLTTFCGPQQQIPPQYSAIQLGGQRAYAVARAGGTLELPARNIVIHSLDLLRVYPSVQAAPRMFSATPEGWSPDPQGQAFSLPEPLGEFPTLLLRASVGSGTYLRSLARDLGAALGVPAHLAGLVRTRVGRYDLSGAVSLEDLAEAPGIPDLEALDFPRIQASERLALELRQGKRPRHTAQGRHVVTLEGQLVAVVDGDGEQLKVVRAWA</sequence>